<accession>B1LBL6</accession>
<name>RL36_THESQ</name>
<gene>
    <name evidence="1" type="primary">rpmJ</name>
    <name type="ordered locus">TRQ2_1370</name>
</gene>
<dbReference type="EMBL" id="CP000969">
    <property type="protein sequence ID" value="ACB09714.1"/>
    <property type="molecule type" value="Genomic_DNA"/>
</dbReference>
<dbReference type="RefSeq" id="WP_004081787.1">
    <property type="nucleotide sequence ID" value="NC_010483.1"/>
</dbReference>
<dbReference type="SMR" id="B1LBL6"/>
<dbReference type="KEGG" id="trq:TRQ2_1370"/>
<dbReference type="HOGENOM" id="CLU_135723_6_2_0"/>
<dbReference type="Proteomes" id="UP000001687">
    <property type="component" value="Chromosome"/>
</dbReference>
<dbReference type="GO" id="GO:0005737">
    <property type="term" value="C:cytoplasm"/>
    <property type="evidence" value="ECO:0007669"/>
    <property type="project" value="UniProtKB-ARBA"/>
</dbReference>
<dbReference type="GO" id="GO:1990904">
    <property type="term" value="C:ribonucleoprotein complex"/>
    <property type="evidence" value="ECO:0007669"/>
    <property type="project" value="UniProtKB-KW"/>
</dbReference>
<dbReference type="GO" id="GO:0005840">
    <property type="term" value="C:ribosome"/>
    <property type="evidence" value="ECO:0007669"/>
    <property type="project" value="UniProtKB-KW"/>
</dbReference>
<dbReference type="GO" id="GO:0003735">
    <property type="term" value="F:structural constituent of ribosome"/>
    <property type="evidence" value="ECO:0007669"/>
    <property type="project" value="InterPro"/>
</dbReference>
<dbReference type="GO" id="GO:0006412">
    <property type="term" value="P:translation"/>
    <property type="evidence" value="ECO:0007669"/>
    <property type="project" value="UniProtKB-UniRule"/>
</dbReference>
<dbReference type="HAMAP" id="MF_00251">
    <property type="entry name" value="Ribosomal_bL36"/>
    <property type="match status" value="1"/>
</dbReference>
<dbReference type="InterPro" id="IPR000473">
    <property type="entry name" value="Ribosomal_bL36"/>
</dbReference>
<dbReference type="InterPro" id="IPR035977">
    <property type="entry name" value="Ribosomal_bL36_sp"/>
</dbReference>
<dbReference type="NCBIfam" id="TIGR01022">
    <property type="entry name" value="rpmJ_bact"/>
    <property type="match status" value="1"/>
</dbReference>
<dbReference type="PANTHER" id="PTHR42888">
    <property type="entry name" value="50S RIBOSOMAL PROTEIN L36, CHLOROPLASTIC"/>
    <property type="match status" value="1"/>
</dbReference>
<dbReference type="PANTHER" id="PTHR42888:SF1">
    <property type="entry name" value="LARGE RIBOSOMAL SUBUNIT PROTEIN BL36C"/>
    <property type="match status" value="1"/>
</dbReference>
<dbReference type="Pfam" id="PF00444">
    <property type="entry name" value="Ribosomal_L36"/>
    <property type="match status" value="1"/>
</dbReference>
<dbReference type="SUPFAM" id="SSF57840">
    <property type="entry name" value="Ribosomal protein L36"/>
    <property type="match status" value="1"/>
</dbReference>
<dbReference type="PROSITE" id="PS00828">
    <property type="entry name" value="RIBOSOMAL_L36"/>
    <property type="match status" value="1"/>
</dbReference>
<protein>
    <recommendedName>
        <fullName evidence="1">Large ribosomal subunit protein bL36</fullName>
    </recommendedName>
    <alternativeName>
        <fullName evidence="2">50S ribosomal protein L36</fullName>
    </alternativeName>
</protein>
<reference key="1">
    <citation type="journal article" date="2011" name="J. Bacteriol.">
        <title>Genome sequence of Thermotoga sp. strain RQ2, a hyperthermophilic bacterium isolated from a geothermally heated region of the seafloor near Ribeira Quente, the Azores.</title>
        <authorList>
            <person name="Swithers K.S."/>
            <person name="DiPippo J.L."/>
            <person name="Bruce D.C."/>
            <person name="Detter C."/>
            <person name="Tapia R."/>
            <person name="Han S."/>
            <person name="Saunders E."/>
            <person name="Goodwin L.A."/>
            <person name="Han J."/>
            <person name="Woyke T."/>
            <person name="Pitluck S."/>
            <person name="Pennacchio L."/>
            <person name="Nolan M."/>
            <person name="Mikhailova N."/>
            <person name="Lykidis A."/>
            <person name="Land M.L."/>
            <person name="Brettin T."/>
            <person name="Stetter K.O."/>
            <person name="Nelson K.E."/>
            <person name="Gogarten J.P."/>
            <person name="Noll K.M."/>
        </authorList>
    </citation>
    <scope>NUCLEOTIDE SEQUENCE [LARGE SCALE GENOMIC DNA]</scope>
    <source>
        <strain>RQ2</strain>
    </source>
</reference>
<organism>
    <name type="scientific">Thermotoga sp. (strain RQ2)</name>
    <dbReference type="NCBI Taxonomy" id="126740"/>
    <lineage>
        <taxon>Bacteria</taxon>
        <taxon>Thermotogati</taxon>
        <taxon>Thermotogota</taxon>
        <taxon>Thermotogae</taxon>
        <taxon>Thermotogales</taxon>
        <taxon>Thermotogaceae</taxon>
        <taxon>Thermotoga</taxon>
    </lineage>
</organism>
<feature type="chain" id="PRO_1000101078" description="Large ribosomal subunit protein bL36">
    <location>
        <begin position="1"/>
        <end position="38"/>
    </location>
</feature>
<keyword id="KW-0687">Ribonucleoprotein</keyword>
<keyword id="KW-0689">Ribosomal protein</keyword>
<evidence type="ECO:0000255" key="1">
    <source>
        <dbReference type="HAMAP-Rule" id="MF_00251"/>
    </source>
</evidence>
<evidence type="ECO:0000305" key="2"/>
<sequence length="38" mass="4564">MKVQASVKKRCEHCKIIRRKKRVYVICKVNPKHNQKQG</sequence>
<comment type="similarity">
    <text evidence="1">Belongs to the bacterial ribosomal protein bL36 family.</text>
</comment>
<proteinExistence type="inferred from homology"/>